<accession>Q861W0</accession>
<accession>Q1XHZ0</accession>
<dbReference type="EMBL" id="AB054536">
    <property type="protein sequence ID" value="BAB83884.1"/>
    <property type="molecule type" value="Genomic_DNA"/>
</dbReference>
<dbReference type="EMBL" id="BA000041">
    <property type="protein sequence ID" value="BAC78159.1"/>
    <property type="molecule type" value="Genomic_DNA"/>
</dbReference>
<dbReference type="EMBL" id="AB210169">
    <property type="protein sequence ID" value="BAE92777.1"/>
    <property type="molecule type" value="Genomic_DNA"/>
</dbReference>
<dbReference type="EMBL" id="AB210170">
    <property type="protein sequence ID" value="BAE92780.1"/>
    <property type="molecule type" value="Genomic_DNA"/>
</dbReference>
<dbReference type="RefSeq" id="NP_001038972.1">
    <property type="nucleotide sequence ID" value="NM_001045507.1"/>
</dbReference>
<dbReference type="SMR" id="Q861W0"/>
<dbReference type="FunCoup" id="Q861W0">
    <property type="interactions" value="1598"/>
</dbReference>
<dbReference type="STRING" id="9598.ENSPTRP00000054519"/>
<dbReference type="PaxDb" id="9598-ENSPTRP00000054519"/>
<dbReference type="GeneID" id="462558"/>
<dbReference type="KEGG" id="ptr:462558"/>
<dbReference type="CTD" id="4795"/>
<dbReference type="eggNOG" id="ENOG502QTMZ">
    <property type="taxonomic scope" value="Eukaryota"/>
</dbReference>
<dbReference type="InParanoid" id="Q861W0"/>
<dbReference type="OrthoDB" id="12655at9604"/>
<dbReference type="Proteomes" id="UP000002277">
    <property type="component" value="Unplaced"/>
</dbReference>
<dbReference type="GO" id="GO:0005634">
    <property type="term" value="C:nucleus"/>
    <property type="evidence" value="ECO:0000250"/>
    <property type="project" value="UniProtKB"/>
</dbReference>
<dbReference type="GO" id="GO:0071222">
    <property type="term" value="P:cellular response to lipopolysaccharide"/>
    <property type="evidence" value="ECO:0000250"/>
    <property type="project" value="UniProtKB"/>
</dbReference>
<dbReference type="GO" id="GO:0043124">
    <property type="term" value="P:negative regulation of canonical NF-kappaB signal transduction"/>
    <property type="evidence" value="ECO:0007669"/>
    <property type="project" value="InterPro"/>
</dbReference>
<dbReference type="GO" id="GO:0031665">
    <property type="term" value="P:negative regulation of lipopolysaccharide-mediated signaling pathway"/>
    <property type="evidence" value="ECO:0000250"/>
    <property type="project" value="UniProtKB"/>
</dbReference>
<dbReference type="GO" id="GO:0032088">
    <property type="term" value="P:negative regulation of NF-kappaB transcription factor activity"/>
    <property type="evidence" value="ECO:0000250"/>
    <property type="project" value="UniProtKB"/>
</dbReference>
<dbReference type="GO" id="GO:0034122">
    <property type="term" value="P:negative regulation of toll-like receptor signaling pathway"/>
    <property type="evidence" value="ECO:0000250"/>
    <property type="project" value="UniProtKB"/>
</dbReference>
<dbReference type="GO" id="GO:0032720">
    <property type="term" value="P:negative regulation of tumor necrosis factor production"/>
    <property type="evidence" value="ECO:0000250"/>
    <property type="project" value="UniProtKB"/>
</dbReference>
<dbReference type="FunFam" id="1.25.40.20:FF:000145">
    <property type="entry name" value="NF-kappa-B inhibitor-like protein 1 isoform X1"/>
    <property type="match status" value="1"/>
</dbReference>
<dbReference type="Gene3D" id="1.25.40.20">
    <property type="entry name" value="Ankyrin repeat-containing domain"/>
    <property type="match status" value="1"/>
</dbReference>
<dbReference type="InterPro" id="IPR036770">
    <property type="entry name" value="Ankyrin_rpt-contain_sf"/>
</dbReference>
<dbReference type="InterPro" id="IPR038753">
    <property type="entry name" value="NFKBIL1"/>
</dbReference>
<dbReference type="PANTHER" id="PTHR15263">
    <property type="entry name" value="I-KAPPA-B-LIKE PROTEIN IKBL"/>
    <property type="match status" value="1"/>
</dbReference>
<dbReference type="PANTHER" id="PTHR15263:SF1">
    <property type="entry name" value="NF-KAPPA-B INHIBITOR-LIKE PROTEIN 1"/>
    <property type="match status" value="1"/>
</dbReference>
<dbReference type="SUPFAM" id="SSF48403">
    <property type="entry name" value="Ankyrin repeat"/>
    <property type="match status" value="1"/>
</dbReference>
<dbReference type="PROSITE" id="PS50297">
    <property type="entry name" value="ANK_REP_REGION"/>
    <property type="match status" value="1"/>
</dbReference>
<sequence>MSNPSPQVPEEEASTSVCRPKSSMASTSRRQRRERRFRRYLSAGRLVRAQALLQRHPGLDVDAGQPPPLHRACARHDAPALCLLLRLGADPAHQDRHGDTALHAAARQGPDAYTDFFLPLLSRCPSAMGIKNKDGETPGQILGWGPPWDSAEEEEDDASKEREWRQKLQGELEDEWQEVMGRFEGDASHETQEPESFSAWSDRLAREHAQKYQQQQREAEGSCRPPRAEGSSQSWRQQEEEQRLFRERARAKEEELRESRARRAQEALGDREPKPTRAGPREEHPRGAGRGSLWRFGDVPWPCPGGGDPEAMAAALVARGPPLEEQGALRRYLRVQQVRWHPDRFLQRFRSQIETWELGRVMGAVTALSQALNRHAEALK</sequence>
<protein>
    <recommendedName>
        <fullName>NF-kappa-B inhibitor-like protein 1</fullName>
    </recommendedName>
    <alternativeName>
        <fullName>Inhibitor of kappa B-like protein</fullName>
        <shortName>I-kappa-B-like protein</shortName>
        <shortName>IkappaBL</shortName>
    </alternativeName>
    <alternativeName>
        <fullName>Nuclear factor of kappa light polypeptide gene enhancer in B-cells inhibitor-like 1</fullName>
    </alternativeName>
</protein>
<feature type="chain" id="PRO_0000067012" description="NF-kappa-B inhibitor-like protein 1">
    <location>
        <begin position="1"/>
        <end position="380"/>
    </location>
</feature>
<feature type="repeat" description="ANK 1">
    <location>
        <begin position="64"/>
        <end position="93"/>
    </location>
</feature>
<feature type="repeat" description="ANK 2">
    <location>
        <begin position="97"/>
        <end position="133"/>
    </location>
</feature>
<feature type="region of interest" description="Disordered" evidence="3">
    <location>
        <begin position="1"/>
        <end position="34"/>
    </location>
</feature>
<feature type="region of interest" description="Disordered" evidence="3">
    <location>
        <begin position="131"/>
        <end position="166"/>
    </location>
</feature>
<feature type="region of interest" description="Disordered" evidence="3">
    <location>
        <begin position="185"/>
        <end position="293"/>
    </location>
</feature>
<feature type="compositionally biased region" description="Basic and acidic residues" evidence="3">
    <location>
        <begin position="237"/>
        <end position="286"/>
    </location>
</feature>
<feature type="modified residue" description="Phosphoserine" evidence="2">
    <location>
        <position position="150"/>
    </location>
</feature>
<feature type="sequence conflict" description="In Ref. 3; BAE92777/BAE92780." evidence="4" ref="3">
    <original>R</original>
    <variation>Q</variation>
    <location>
        <position position="19"/>
    </location>
</feature>
<feature type="sequence conflict" description="In Ref. 3; BAE92777/BAE92780." evidence="4" ref="3">
    <original>D</original>
    <variation>A</variation>
    <location>
        <position position="111"/>
    </location>
</feature>
<evidence type="ECO:0000250" key="1"/>
<evidence type="ECO:0000250" key="2">
    <source>
        <dbReference type="UniProtKB" id="Q9UBC1"/>
    </source>
</evidence>
<evidence type="ECO:0000256" key="3">
    <source>
        <dbReference type="SAM" id="MobiDB-lite"/>
    </source>
</evidence>
<evidence type="ECO:0000305" key="4"/>
<reference key="1">
    <citation type="journal article" date="2002" name="Immunol. Rev.">
        <title>Comparative genomic analysis of the MHC: the evolution of class I duplication blocks, diversity and complexity from shark to man.</title>
        <authorList>
            <person name="Kulski J.K."/>
            <person name="Shiina T."/>
            <person name="Anzai T."/>
            <person name="Kohara S."/>
            <person name="Inoko H."/>
        </authorList>
    </citation>
    <scope>NUCLEOTIDE SEQUENCE [GENOMIC DNA]</scope>
</reference>
<reference key="2">
    <citation type="journal article" date="2003" name="Proc. Natl. Acad. Sci. U.S.A.">
        <title>Comparative sequencing of human and chimpanzee MHC class I regions unveils insertions/deletions as the major path to genomic divergence.</title>
        <authorList>
            <person name="Anzai T."/>
            <person name="Shiina T."/>
            <person name="Kimura N."/>
            <person name="Yanagiya K."/>
            <person name="Kohara S."/>
            <person name="Shigenari A."/>
            <person name="Yamagata T."/>
            <person name="Kulski J.K."/>
            <person name="Naruse T.K."/>
            <person name="Fujimori Y."/>
            <person name="Fukuzumi Y."/>
            <person name="Yamazaki M."/>
            <person name="Tashiro H."/>
            <person name="Iwamoto C."/>
            <person name="Umehara Y."/>
            <person name="Imanishi T."/>
            <person name="Meyer A."/>
            <person name="Ikeo K."/>
            <person name="Gojobori T."/>
            <person name="Bahram S."/>
            <person name="Inoko H."/>
        </authorList>
    </citation>
    <scope>NUCLEOTIDE SEQUENCE [LARGE SCALE GENOMIC DNA]</scope>
</reference>
<reference key="3">
    <citation type="journal article" date="2006" name="Genetics">
        <title>Rapid evolution of major histocompatibility complex class I genes in primates generates new disease alleles in humans via hitchhiking diversity.</title>
        <authorList>
            <person name="Shiina T."/>
            <person name="Ota M."/>
            <person name="Shimizu S."/>
            <person name="Katsuyama Y."/>
            <person name="Hashimoto N."/>
            <person name="Takasu M."/>
            <person name="Anzai T."/>
            <person name="Kulski J.K."/>
            <person name="Kikkawa E."/>
            <person name="Naruse T."/>
            <person name="Kimura N."/>
            <person name="Yanagiya K."/>
            <person name="Watanabe A."/>
            <person name="Hosomichi K."/>
            <person name="Kohara S."/>
            <person name="Iwamoto C."/>
            <person name="Umehara Y."/>
            <person name="Meyer A."/>
            <person name="Wanner V."/>
            <person name="Sano K."/>
            <person name="Macquin C."/>
            <person name="Ikeo K."/>
            <person name="Tokunaga K."/>
            <person name="Gojobori T."/>
            <person name="Inoko H."/>
            <person name="Bahram S."/>
        </authorList>
    </citation>
    <scope>NUCLEOTIDE SEQUENCE [LARGE SCALE GENOMIC DNA]</scope>
</reference>
<keyword id="KW-0040">ANK repeat</keyword>
<keyword id="KW-0539">Nucleus</keyword>
<keyword id="KW-0597">Phosphoprotein</keyword>
<keyword id="KW-1185">Reference proteome</keyword>
<keyword id="KW-0677">Repeat</keyword>
<gene>
    <name type="primary">NFKBIL1</name>
    <name type="synonym">IKBL</name>
</gene>
<proteinExistence type="inferred from homology"/>
<name>IKBL1_PANTR</name>
<organism>
    <name type="scientific">Pan troglodytes</name>
    <name type="common">Chimpanzee</name>
    <dbReference type="NCBI Taxonomy" id="9598"/>
    <lineage>
        <taxon>Eukaryota</taxon>
        <taxon>Metazoa</taxon>
        <taxon>Chordata</taxon>
        <taxon>Craniata</taxon>
        <taxon>Vertebrata</taxon>
        <taxon>Euteleostomi</taxon>
        <taxon>Mammalia</taxon>
        <taxon>Eutheria</taxon>
        <taxon>Euarchontoglires</taxon>
        <taxon>Primates</taxon>
        <taxon>Haplorrhini</taxon>
        <taxon>Catarrhini</taxon>
        <taxon>Hominidae</taxon>
        <taxon>Pan</taxon>
    </lineage>
</organism>
<comment type="function">
    <text evidence="1">Involved in the regulation of innate immune response. Acts as negative regulator of Toll-like receptor and interferon-regulatory factor (IRF) signaling pathways. Contributes to the negative regulation of transcriptional activation of NF-kappa-B target genes in response to endogenous pro-inflammatory stimuli (By similarity).</text>
</comment>
<comment type="subunit">
    <text evidence="1">Interacts with CACTIN (via N-terminal domain); the interaction occurs in a pro-inflammatory-independent manner.</text>
</comment>
<comment type="subcellular location">
    <subcellularLocation>
        <location evidence="1">Nucleus</location>
    </subcellularLocation>
    <text evidence="1">Nuclear localization with a speckled expression pattern in some cells. Colocalizes with CACTIN in the nucleus (By similarity).</text>
</comment>